<evidence type="ECO:0000255" key="1">
    <source>
        <dbReference type="HAMAP-Rule" id="MF_00011"/>
    </source>
</evidence>
<evidence type="ECO:0000305" key="2"/>
<feature type="chain" id="PRO_0000336999" description="Adenylosuccinate synthetase">
    <location>
        <begin position="1"/>
        <end position="430"/>
    </location>
</feature>
<feature type="active site" description="Proton acceptor" evidence="1">
    <location>
        <position position="13"/>
    </location>
</feature>
<feature type="active site" description="Proton donor" evidence="1">
    <location>
        <position position="41"/>
    </location>
</feature>
<feature type="binding site" evidence="1">
    <location>
        <begin position="12"/>
        <end position="18"/>
    </location>
    <ligand>
        <name>GTP</name>
        <dbReference type="ChEBI" id="CHEBI:37565"/>
    </ligand>
</feature>
<feature type="binding site" description="in other chain" evidence="1">
    <location>
        <begin position="13"/>
        <end position="16"/>
    </location>
    <ligand>
        <name>IMP</name>
        <dbReference type="ChEBI" id="CHEBI:58053"/>
        <note>ligand shared between dimeric partners</note>
    </ligand>
</feature>
<feature type="binding site" evidence="1">
    <location>
        <position position="13"/>
    </location>
    <ligand>
        <name>Mg(2+)</name>
        <dbReference type="ChEBI" id="CHEBI:18420"/>
    </ligand>
</feature>
<feature type="binding site" description="in other chain" evidence="1">
    <location>
        <begin position="38"/>
        <end position="41"/>
    </location>
    <ligand>
        <name>IMP</name>
        <dbReference type="ChEBI" id="CHEBI:58053"/>
        <note>ligand shared between dimeric partners</note>
    </ligand>
</feature>
<feature type="binding site" evidence="1">
    <location>
        <begin position="40"/>
        <end position="42"/>
    </location>
    <ligand>
        <name>GTP</name>
        <dbReference type="ChEBI" id="CHEBI:37565"/>
    </ligand>
</feature>
<feature type="binding site" evidence="1">
    <location>
        <position position="40"/>
    </location>
    <ligand>
        <name>Mg(2+)</name>
        <dbReference type="ChEBI" id="CHEBI:18420"/>
    </ligand>
</feature>
<feature type="binding site" description="in other chain" evidence="1">
    <location>
        <position position="130"/>
    </location>
    <ligand>
        <name>IMP</name>
        <dbReference type="ChEBI" id="CHEBI:58053"/>
        <note>ligand shared between dimeric partners</note>
    </ligand>
</feature>
<feature type="binding site" evidence="1">
    <location>
        <position position="144"/>
    </location>
    <ligand>
        <name>IMP</name>
        <dbReference type="ChEBI" id="CHEBI:58053"/>
        <note>ligand shared between dimeric partners</note>
    </ligand>
</feature>
<feature type="binding site" description="in other chain" evidence="1">
    <location>
        <position position="224"/>
    </location>
    <ligand>
        <name>IMP</name>
        <dbReference type="ChEBI" id="CHEBI:58053"/>
        <note>ligand shared between dimeric partners</note>
    </ligand>
</feature>
<feature type="binding site" description="in other chain" evidence="1">
    <location>
        <position position="239"/>
    </location>
    <ligand>
        <name>IMP</name>
        <dbReference type="ChEBI" id="CHEBI:58053"/>
        <note>ligand shared between dimeric partners</note>
    </ligand>
</feature>
<feature type="binding site" evidence="1">
    <location>
        <begin position="299"/>
        <end position="305"/>
    </location>
    <ligand>
        <name>substrate</name>
    </ligand>
</feature>
<feature type="binding site" description="in other chain" evidence="1">
    <location>
        <position position="303"/>
    </location>
    <ligand>
        <name>IMP</name>
        <dbReference type="ChEBI" id="CHEBI:58053"/>
        <note>ligand shared between dimeric partners</note>
    </ligand>
</feature>
<feature type="binding site" evidence="1">
    <location>
        <position position="305"/>
    </location>
    <ligand>
        <name>GTP</name>
        <dbReference type="ChEBI" id="CHEBI:37565"/>
    </ligand>
</feature>
<feature type="binding site" evidence="1">
    <location>
        <begin position="331"/>
        <end position="333"/>
    </location>
    <ligand>
        <name>GTP</name>
        <dbReference type="ChEBI" id="CHEBI:37565"/>
    </ligand>
</feature>
<feature type="binding site" evidence="1">
    <location>
        <begin position="413"/>
        <end position="415"/>
    </location>
    <ligand>
        <name>GTP</name>
        <dbReference type="ChEBI" id="CHEBI:37565"/>
    </ligand>
</feature>
<organism>
    <name type="scientific">Azorhizobium caulinodans (strain ATCC 43989 / DSM 5975 / JCM 20966 / LMG 6465 / NBRC 14845 / NCIMB 13405 / ORS 571)</name>
    <dbReference type="NCBI Taxonomy" id="438753"/>
    <lineage>
        <taxon>Bacteria</taxon>
        <taxon>Pseudomonadati</taxon>
        <taxon>Pseudomonadota</taxon>
        <taxon>Alphaproteobacteria</taxon>
        <taxon>Hyphomicrobiales</taxon>
        <taxon>Xanthobacteraceae</taxon>
        <taxon>Azorhizobium</taxon>
    </lineage>
</organism>
<comment type="function">
    <text evidence="1">Plays an important role in the de novo pathway of purine nucleotide biosynthesis. Catalyzes the first committed step in the biosynthesis of AMP from IMP.</text>
</comment>
<comment type="catalytic activity">
    <reaction evidence="1">
        <text>IMP + L-aspartate + GTP = N(6)-(1,2-dicarboxyethyl)-AMP + GDP + phosphate + 2 H(+)</text>
        <dbReference type="Rhea" id="RHEA:15753"/>
        <dbReference type="ChEBI" id="CHEBI:15378"/>
        <dbReference type="ChEBI" id="CHEBI:29991"/>
        <dbReference type="ChEBI" id="CHEBI:37565"/>
        <dbReference type="ChEBI" id="CHEBI:43474"/>
        <dbReference type="ChEBI" id="CHEBI:57567"/>
        <dbReference type="ChEBI" id="CHEBI:58053"/>
        <dbReference type="ChEBI" id="CHEBI:58189"/>
        <dbReference type="EC" id="6.3.4.4"/>
    </reaction>
</comment>
<comment type="cofactor">
    <cofactor evidence="1">
        <name>Mg(2+)</name>
        <dbReference type="ChEBI" id="CHEBI:18420"/>
    </cofactor>
    <text evidence="1">Binds 1 Mg(2+) ion per subunit.</text>
</comment>
<comment type="pathway">
    <text evidence="1">Purine metabolism; AMP biosynthesis via de novo pathway; AMP from IMP: step 1/2.</text>
</comment>
<comment type="subunit">
    <text evidence="1">Homodimer.</text>
</comment>
<comment type="subcellular location">
    <subcellularLocation>
        <location evidence="1">Cytoplasm</location>
    </subcellularLocation>
</comment>
<comment type="similarity">
    <text evidence="1">Belongs to the adenylosuccinate synthetase family.</text>
</comment>
<comment type="sequence caution" evidence="2">
    <conflict type="erroneous initiation">
        <sequence resource="EMBL-CDS" id="BAF90668"/>
    </conflict>
</comment>
<keyword id="KW-0963">Cytoplasm</keyword>
<keyword id="KW-0342">GTP-binding</keyword>
<keyword id="KW-0436">Ligase</keyword>
<keyword id="KW-0460">Magnesium</keyword>
<keyword id="KW-0479">Metal-binding</keyword>
<keyword id="KW-0547">Nucleotide-binding</keyword>
<keyword id="KW-0658">Purine biosynthesis</keyword>
<keyword id="KW-1185">Reference proteome</keyword>
<dbReference type="EC" id="6.3.4.4" evidence="1"/>
<dbReference type="EMBL" id="AP009384">
    <property type="protein sequence ID" value="BAF90668.1"/>
    <property type="status" value="ALT_INIT"/>
    <property type="molecule type" value="Genomic_DNA"/>
</dbReference>
<dbReference type="RefSeq" id="WP_043879832.1">
    <property type="nucleotide sequence ID" value="NC_009937.1"/>
</dbReference>
<dbReference type="SMR" id="A8I1V7"/>
<dbReference type="STRING" id="438753.AZC_4670"/>
<dbReference type="KEGG" id="azc:AZC_4670"/>
<dbReference type="eggNOG" id="COG0104">
    <property type="taxonomic scope" value="Bacteria"/>
</dbReference>
<dbReference type="HOGENOM" id="CLU_029848_0_0_5"/>
<dbReference type="UniPathway" id="UPA00075">
    <property type="reaction ID" value="UER00335"/>
</dbReference>
<dbReference type="Proteomes" id="UP000000270">
    <property type="component" value="Chromosome"/>
</dbReference>
<dbReference type="GO" id="GO:0005737">
    <property type="term" value="C:cytoplasm"/>
    <property type="evidence" value="ECO:0007669"/>
    <property type="project" value="UniProtKB-SubCell"/>
</dbReference>
<dbReference type="GO" id="GO:0004019">
    <property type="term" value="F:adenylosuccinate synthase activity"/>
    <property type="evidence" value="ECO:0007669"/>
    <property type="project" value="UniProtKB-UniRule"/>
</dbReference>
<dbReference type="GO" id="GO:0005525">
    <property type="term" value="F:GTP binding"/>
    <property type="evidence" value="ECO:0007669"/>
    <property type="project" value="UniProtKB-UniRule"/>
</dbReference>
<dbReference type="GO" id="GO:0000287">
    <property type="term" value="F:magnesium ion binding"/>
    <property type="evidence" value="ECO:0007669"/>
    <property type="project" value="UniProtKB-UniRule"/>
</dbReference>
<dbReference type="GO" id="GO:0044208">
    <property type="term" value="P:'de novo' AMP biosynthetic process"/>
    <property type="evidence" value="ECO:0007669"/>
    <property type="project" value="UniProtKB-UniRule"/>
</dbReference>
<dbReference type="GO" id="GO:0046040">
    <property type="term" value="P:IMP metabolic process"/>
    <property type="evidence" value="ECO:0007669"/>
    <property type="project" value="TreeGrafter"/>
</dbReference>
<dbReference type="CDD" id="cd03108">
    <property type="entry name" value="AdSS"/>
    <property type="match status" value="1"/>
</dbReference>
<dbReference type="FunFam" id="1.10.300.10:FF:000001">
    <property type="entry name" value="Adenylosuccinate synthetase"/>
    <property type="match status" value="1"/>
</dbReference>
<dbReference type="FunFam" id="3.90.170.10:FF:000001">
    <property type="entry name" value="Adenylosuccinate synthetase"/>
    <property type="match status" value="1"/>
</dbReference>
<dbReference type="Gene3D" id="3.40.440.10">
    <property type="entry name" value="Adenylosuccinate Synthetase, subunit A, domain 1"/>
    <property type="match status" value="1"/>
</dbReference>
<dbReference type="Gene3D" id="1.10.300.10">
    <property type="entry name" value="Adenylosuccinate Synthetase, subunit A, domain 2"/>
    <property type="match status" value="1"/>
</dbReference>
<dbReference type="Gene3D" id="3.90.170.10">
    <property type="entry name" value="Adenylosuccinate Synthetase, subunit A, domain 3"/>
    <property type="match status" value="1"/>
</dbReference>
<dbReference type="HAMAP" id="MF_00011">
    <property type="entry name" value="Adenylosucc_synth"/>
    <property type="match status" value="1"/>
</dbReference>
<dbReference type="InterPro" id="IPR018220">
    <property type="entry name" value="Adenylosuccin_syn_GTP-bd"/>
</dbReference>
<dbReference type="InterPro" id="IPR033128">
    <property type="entry name" value="Adenylosuccin_syn_Lys_AS"/>
</dbReference>
<dbReference type="InterPro" id="IPR042109">
    <property type="entry name" value="Adenylosuccinate_synth_dom1"/>
</dbReference>
<dbReference type="InterPro" id="IPR042110">
    <property type="entry name" value="Adenylosuccinate_synth_dom2"/>
</dbReference>
<dbReference type="InterPro" id="IPR042111">
    <property type="entry name" value="Adenylosuccinate_synth_dom3"/>
</dbReference>
<dbReference type="InterPro" id="IPR001114">
    <property type="entry name" value="Adenylosuccinate_synthetase"/>
</dbReference>
<dbReference type="InterPro" id="IPR027417">
    <property type="entry name" value="P-loop_NTPase"/>
</dbReference>
<dbReference type="NCBIfam" id="NF002223">
    <property type="entry name" value="PRK01117.1"/>
    <property type="match status" value="1"/>
</dbReference>
<dbReference type="NCBIfam" id="TIGR00184">
    <property type="entry name" value="purA"/>
    <property type="match status" value="1"/>
</dbReference>
<dbReference type="PANTHER" id="PTHR11846">
    <property type="entry name" value="ADENYLOSUCCINATE SYNTHETASE"/>
    <property type="match status" value="1"/>
</dbReference>
<dbReference type="PANTHER" id="PTHR11846:SF0">
    <property type="entry name" value="ADENYLOSUCCINATE SYNTHETASE"/>
    <property type="match status" value="1"/>
</dbReference>
<dbReference type="Pfam" id="PF00709">
    <property type="entry name" value="Adenylsucc_synt"/>
    <property type="match status" value="1"/>
</dbReference>
<dbReference type="SMART" id="SM00788">
    <property type="entry name" value="Adenylsucc_synt"/>
    <property type="match status" value="1"/>
</dbReference>
<dbReference type="SUPFAM" id="SSF52540">
    <property type="entry name" value="P-loop containing nucleoside triphosphate hydrolases"/>
    <property type="match status" value="1"/>
</dbReference>
<dbReference type="PROSITE" id="PS01266">
    <property type="entry name" value="ADENYLOSUCCIN_SYN_1"/>
    <property type="match status" value="1"/>
</dbReference>
<dbReference type="PROSITE" id="PS00513">
    <property type="entry name" value="ADENYLOSUCCIN_SYN_2"/>
    <property type="match status" value="1"/>
</dbReference>
<name>PURA_AZOC5</name>
<gene>
    <name evidence="1" type="primary">purA</name>
    <name type="ordered locus">AZC_4670</name>
</gene>
<accession>A8I1V7</accession>
<proteinExistence type="inferred from homology"/>
<reference key="1">
    <citation type="submission" date="2007-04" db="EMBL/GenBank/DDBJ databases">
        <title>Complete genome sequence of the nitrogen-fixing bacterium Azorhizobium caulinodans ORS571.</title>
        <authorList>
            <person name="Lee K.B."/>
            <person name="Backer P.D."/>
            <person name="Aono T."/>
            <person name="Liu C.T."/>
            <person name="Suzuki S."/>
            <person name="Suzuki T."/>
            <person name="Kaneko T."/>
            <person name="Yamada M."/>
            <person name="Tabata S."/>
            <person name="Kupfer D.M."/>
            <person name="Najar F.Z."/>
            <person name="Wiley G.B."/>
            <person name="Roe B."/>
            <person name="Binnewies T."/>
            <person name="Ussery D."/>
            <person name="Vereecke D."/>
            <person name="Gevers D."/>
            <person name="Holsters M."/>
            <person name="Oyaizu H."/>
        </authorList>
    </citation>
    <scope>NUCLEOTIDE SEQUENCE [LARGE SCALE GENOMIC DNA]</scope>
    <source>
        <strain>ATCC 43989 / DSM 5975 / JCM 20966 / LMG 6465 / NBRC 14845 / NCIMB 13405 / ORS 571</strain>
    </source>
</reference>
<sequence>MANVVVVGSQWGDEGKGKIVDWLSEQADVVVRFQGGHNAGHTLVVDGVTYKLSLLPSGVVRPGKLSVIGNGVVLDPQALVDELARLESQGVHVGPDRLRIAENTPLILPLHRELDALRENASEGTRIGTTKRGIGPAYEDKVGRRAIRLVDLVDPKALPAKVERLLTHHNLIRRGLGVEEVNPQALVDELLALAPKVLPYMDRVWELLDKARKDGKKILFEGAQGALLDIDHGTYPYVTSSNTVASSAAGGSGVGPGALDYVLGITKAYTTRVGEGPFPTELTDEVGKTLGTKGREFGVVTGRPRRCGWFDAVLVRQTVRTCGIHGIALTKLDVLDGFDEIKVCVGYKLDGKEIDYFPSEMGAQARVEPIYETIEGWTDSTAGARSWADLPAEAVKYVRWLEELIGCPVAVLSTSPERNDTILVHNPFQA</sequence>
<protein>
    <recommendedName>
        <fullName evidence="1">Adenylosuccinate synthetase</fullName>
        <shortName evidence="1">AMPSase</shortName>
        <shortName evidence="1">AdSS</shortName>
        <ecNumber evidence="1">6.3.4.4</ecNumber>
    </recommendedName>
    <alternativeName>
        <fullName evidence="1">IMP--aspartate ligase</fullName>
    </alternativeName>
</protein>